<evidence type="ECO:0000255" key="1">
    <source>
        <dbReference type="HAMAP-Rule" id="MF_00685"/>
    </source>
</evidence>
<evidence type="ECO:0000256" key="2">
    <source>
        <dbReference type="SAM" id="MobiDB-lite"/>
    </source>
</evidence>
<gene>
    <name evidence="1" type="primary">glgB</name>
    <name type="ordered locus">Ent638_3840</name>
</gene>
<comment type="function">
    <text evidence="1">Catalyzes the formation of the alpha-1,6-glucosidic linkages in glycogen by scission of a 1,4-alpha-linked oligosaccharide from growing alpha-1,4-glucan chains and the subsequent attachment of the oligosaccharide to the alpha-1,6 position.</text>
</comment>
<comment type="catalytic activity">
    <reaction evidence="1">
        <text>Transfers a segment of a (1-&gt;4)-alpha-D-glucan chain to a primary hydroxy group in a similar glucan chain.</text>
        <dbReference type="EC" id="2.4.1.18"/>
    </reaction>
</comment>
<comment type="pathway">
    <text evidence="1">Glycan biosynthesis; glycogen biosynthesis.</text>
</comment>
<comment type="subunit">
    <text evidence="1">Monomer.</text>
</comment>
<comment type="similarity">
    <text evidence="1">Belongs to the glycosyl hydrolase 13 family. GlgB subfamily.</text>
</comment>
<dbReference type="EC" id="2.4.1.18" evidence="1"/>
<dbReference type="EMBL" id="CP000653">
    <property type="protein sequence ID" value="ABP62495.1"/>
    <property type="molecule type" value="Genomic_DNA"/>
</dbReference>
<dbReference type="RefSeq" id="WP_015960800.1">
    <property type="nucleotide sequence ID" value="NC_009436.1"/>
</dbReference>
<dbReference type="SMR" id="A4WFL5"/>
<dbReference type="STRING" id="399742.Ent638_3840"/>
<dbReference type="CAZy" id="CBM48">
    <property type="family name" value="Carbohydrate-Binding Module Family 48"/>
</dbReference>
<dbReference type="CAZy" id="GH13">
    <property type="family name" value="Glycoside Hydrolase Family 13"/>
</dbReference>
<dbReference type="KEGG" id="ent:Ent638_3840"/>
<dbReference type="eggNOG" id="COG0296">
    <property type="taxonomic scope" value="Bacteria"/>
</dbReference>
<dbReference type="HOGENOM" id="CLU_004245_3_2_6"/>
<dbReference type="OrthoDB" id="9800174at2"/>
<dbReference type="UniPathway" id="UPA00164"/>
<dbReference type="Proteomes" id="UP000000230">
    <property type="component" value="Chromosome"/>
</dbReference>
<dbReference type="GO" id="GO:0005829">
    <property type="term" value="C:cytosol"/>
    <property type="evidence" value="ECO:0007669"/>
    <property type="project" value="TreeGrafter"/>
</dbReference>
<dbReference type="GO" id="GO:0003844">
    <property type="term" value="F:1,4-alpha-glucan branching enzyme activity"/>
    <property type="evidence" value="ECO:0007669"/>
    <property type="project" value="UniProtKB-UniRule"/>
</dbReference>
<dbReference type="GO" id="GO:0043169">
    <property type="term" value="F:cation binding"/>
    <property type="evidence" value="ECO:0007669"/>
    <property type="project" value="InterPro"/>
</dbReference>
<dbReference type="GO" id="GO:0004553">
    <property type="term" value="F:hydrolase activity, hydrolyzing O-glycosyl compounds"/>
    <property type="evidence" value="ECO:0007669"/>
    <property type="project" value="InterPro"/>
</dbReference>
<dbReference type="GO" id="GO:0005978">
    <property type="term" value="P:glycogen biosynthetic process"/>
    <property type="evidence" value="ECO:0007669"/>
    <property type="project" value="UniProtKB-UniRule"/>
</dbReference>
<dbReference type="CDD" id="cd11322">
    <property type="entry name" value="AmyAc_Glg_BE"/>
    <property type="match status" value="1"/>
</dbReference>
<dbReference type="CDD" id="cd02855">
    <property type="entry name" value="E_set_GBE_prok_N"/>
    <property type="match status" value="1"/>
</dbReference>
<dbReference type="FunFam" id="2.60.40.10:FF:000169">
    <property type="entry name" value="1,4-alpha-glucan branching enzyme GlgB"/>
    <property type="match status" value="1"/>
</dbReference>
<dbReference type="FunFam" id="2.60.40.1180:FF:000002">
    <property type="entry name" value="1,4-alpha-glucan branching enzyme GlgB"/>
    <property type="match status" value="1"/>
</dbReference>
<dbReference type="FunFam" id="3.20.20.80:FF:000003">
    <property type="entry name" value="1,4-alpha-glucan branching enzyme GlgB"/>
    <property type="match status" value="1"/>
</dbReference>
<dbReference type="Gene3D" id="3.20.20.80">
    <property type="entry name" value="Glycosidases"/>
    <property type="match status" value="1"/>
</dbReference>
<dbReference type="Gene3D" id="2.60.40.1180">
    <property type="entry name" value="Golgi alpha-mannosidase II"/>
    <property type="match status" value="1"/>
</dbReference>
<dbReference type="Gene3D" id="2.60.40.10">
    <property type="entry name" value="Immunoglobulins"/>
    <property type="match status" value="2"/>
</dbReference>
<dbReference type="HAMAP" id="MF_00685">
    <property type="entry name" value="GlgB"/>
    <property type="match status" value="1"/>
</dbReference>
<dbReference type="InterPro" id="IPR006048">
    <property type="entry name" value="A-amylase/branching_C"/>
</dbReference>
<dbReference type="InterPro" id="IPR037439">
    <property type="entry name" value="Branching_enzy"/>
</dbReference>
<dbReference type="InterPro" id="IPR006407">
    <property type="entry name" value="GlgB"/>
</dbReference>
<dbReference type="InterPro" id="IPR054169">
    <property type="entry name" value="GlgB_N"/>
</dbReference>
<dbReference type="InterPro" id="IPR044143">
    <property type="entry name" value="GlgB_N_E_set_prok"/>
</dbReference>
<dbReference type="InterPro" id="IPR006047">
    <property type="entry name" value="Glyco_hydro_13_cat_dom"/>
</dbReference>
<dbReference type="InterPro" id="IPR004193">
    <property type="entry name" value="Glyco_hydro_13_N"/>
</dbReference>
<dbReference type="InterPro" id="IPR013780">
    <property type="entry name" value="Glyco_hydro_b"/>
</dbReference>
<dbReference type="InterPro" id="IPR017853">
    <property type="entry name" value="Glycoside_hydrolase_SF"/>
</dbReference>
<dbReference type="InterPro" id="IPR013783">
    <property type="entry name" value="Ig-like_fold"/>
</dbReference>
<dbReference type="InterPro" id="IPR014756">
    <property type="entry name" value="Ig_E-set"/>
</dbReference>
<dbReference type="NCBIfam" id="TIGR01515">
    <property type="entry name" value="branching_enzym"/>
    <property type="match status" value="1"/>
</dbReference>
<dbReference type="NCBIfam" id="NF003811">
    <property type="entry name" value="PRK05402.1"/>
    <property type="match status" value="1"/>
</dbReference>
<dbReference type="NCBIfam" id="NF008967">
    <property type="entry name" value="PRK12313.1"/>
    <property type="match status" value="1"/>
</dbReference>
<dbReference type="PANTHER" id="PTHR43651">
    <property type="entry name" value="1,4-ALPHA-GLUCAN-BRANCHING ENZYME"/>
    <property type="match status" value="1"/>
</dbReference>
<dbReference type="PANTHER" id="PTHR43651:SF3">
    <property type="entry name" value="1,4-ALPHA-GLUCAN-BRANCHING ENZYME"/>
    <property type="match status" value="1"/>
</dbReference>
<dbReference type="Pfam" id="PF00128">
    <property type="entry name" value="Alpha-amylase"/>
    <property type="match status" value="1"/>
</dbReference>
<dbReference type="Pfam" id="PF02806">
    <property type="entry name" value="Alpha-amylase_C"/>
    <property type="match status" value="1"/>
</dbReference>
<dbReference type="Pfam" id="PF02922">
    <property type="entry name" value="CBM_48"/>
    <property type="match status" value="1"/>
</dbReference>
<dbReference type="Pfam" id="PF22019">
    <property type="entry name" value="GlgB_N"/>
    <property type="match status" value="1"/>
</dbReference>
<dbReference type="PIRSF" id="PIRSF000463">
    <property type="entry name" value="GlgB"/>
    <property type="match status" value="1"/>
</dbReference>
<dbReference type="SMART" id="SM00642">
    <property type="entry name" value="Aamy"/>
    <property type="match status" value="1"/>
</dbReference>
<dbReference type="SUPFAM" id="SSF51445">
    <property type="entry name" value="(Trans)glycosidases"/>
    <property type="match status" value="1"/>
</dbReference>
<dbReference type="SUPFAM" id="SSF81296">
    <property type="entry name" value="E set domains"/>
    <property type="match status" value="2"/>
</dbReference>
<dbReference type="SUPFAM" id="SSF51011">
    <property type="entry name" value="Glycosyl hydrolase domain"/>
    <property type="match status" value="1"/>
</dbReference>
<proteinExistence type="inferred from homology"/>
<keyword id="KW-0119">Carbohydrate metabolism</keyword>
<keyword id="KW-0320">Glycogen biosynthesis</keyword>
<keyword id="KW-0321">Glycogen metabolism</keyword>
<keyword id="KW-0328">Glycosyltransferase</keyword>
<keyword id="KW-0808">Transferase</keyword>
<sequence length="728" mass="83912">MSDRIDRDVINALIAGHFSDPFSVLGMHPTEAGVEVRALLPDATEVWVIEPKTGRKVGKLECLDSRGFFSGVIPRRKNIFRYQLAVLWHGQENLIDDPYSFGPLIQEMDAWLLSEGTHLRPYETLGAHADTMDGITGTRFSVWAPNAQRVSVVGQFNYWDGRRHPMRLRRESGIWELFIPGAHNGQLYKFEMIDAHGKLRVKADPYAFEAQMRPATASLICGLPEKVVQSEERKQANNFDAPISIYEVHLGSWRRHTDNNFWLSYRELADQLVPYAKWMGFTHIELLPINEHPFDGSWGYQPTGLYAPTRRFGTRDDFRYFINAAHAAGLSVILDWVPGHFPSDDFGLSEFDGTDLYEHSDPREGYHQDWNTLIYNYGRREVANYLVGNALYWIERFGIDALRVDAVASMIYRDYSRKEGEWIPNEYGGRENLEAIEFLRNTNRILGEQVPGAVTMAEESTDFPGVSRPPSMGGLGFWYKWNLGWMHDTLDYFKLDPVFRKYHHDKLTFGMLYNNTENFVLPLSHDEVVHGKKSILDRMPGDAWQKFANLRAYYGWMFAFPGKKLLFMGNEFAQGREWNHDSSLDWHLLEGGDNWHHGVQRLVRDLNLTYRHHKALHEMDFDSYGFEWLVVDDHERSVFVFVRRDSAGNEIIVASNFTPVPRPHYRFGINQPGKWREILNTDSSHYHGSNAGNAGAVQSDEHESHGRPHSLSLTLPPLSTIWLVREGE</sequence>
<accession>A4WFL5</accession>
<organism>
    <name type="scientific">Enterobacter sp. (strain 638)</name>
    <dbReference type="NCBI Taxonomy" id="399742"/>
    <lineage>
        <taxon>Bacteria</taxon>
        <taxon>Pseudomonadati</taxon>
        <taxon>Pseudomonadota</taxon>
        <taxon>Gammaproteobacteria</taxon>
        <taxon>Enterobacterales</taxon>
        <taxon>Enterobacteriaceae</taxon>
        <taxon>Enterobacter</taxon>
    </lineage>
</organism>
<reference key="1">
    <citation type="journal article" date="2010" name="PLoS Genet.">
        <title>Genome sequence of the plant growth promoting endophytic bacterium Enterobacter sp. 638.</title>
        <authorList>
            <person name="Taghavi S."/>
            <person name="van der Lelie D."/>
            <person name="Hoffman A."/>
            <person name="Zhang Y.B."/>
            <person name="Walla M.D."/>
            <person name="Vangronsveld J."/>
            <person name="Newman L."/>
            <person name="Monchy S."/>
        </authorList>
    </citation>
    <scope>NUCLEOTIDE SEQUENCE [LARGE SCALE GENOMIC DNA]</scope>
    <source>
        <strain>638</strain>
    </source>
</reference>
<name>GLGB_ENT38</name>
<protein>
    <recommendedName>
        <fullName evidence="1">1,4-alpha-glucan branching enzyme GlgB</fullName>
        <ecNumber evidence="1">2.4.1.18</ecNumber>
    </recommendedName>
    <alternativeName>
        <fullName evidence="1">1,4-alpha-D-glucan:1,4-alpha-D-glucan 6-glucosyl-transferase</fullName>
    </alternativeName>
    <alternativeName>
        <fullName evidence="1">Alpha-(1-&gt;4)-glucan branching enzyme</fullName>
    </alternativeName>
    <alternativeName>
        <fullName evidence="1">Glycogen branching enzyme</fullName>
        <shortName evidence="1">BE</shortName>
    </alternativeName>
</protein>
<feature type="chain" id="PRO_1000061991" description="1,4-alpha-glucan branching enzyme GlgB">
    <location>
        <begin position="1"/>
        <end position="728"/>
    </location>
</feature>
<feature type="region of interest" description="Disordered" evidence="2">
    <location>
        <begin position="686"/>
        <end position="712"/>
    </location>
</feature>
<feature type="active site" description="Nucleophile" evidence="1">
    <location>
        <position position="405"/>
    </location>
</feature>
<feature type="active site" description="Proton donor" evidence="1">
    <location>
        <position position="458"/>
    </location>
</feature>